<keyword id="KW-0472">Membrane</keyword>
<keyword id="KW-0496">Mitochondrion</keyword>
<keyword id="KW-0999">Mitochondrion inner membrane</keyword>
<keyword id="KW-1185">Reference proteome</keyword>
<keyword id="KW-0677">Repeat</keyword>
<keyword id="KW-0812">Transmembrane</keyword>
<keyword id="KW-1133">Transmembrane helix</keyword>
<keyword id="KW-0813">Transport</keyword>
<organism>
    <name type="scientific">Dictyostelium discoideum</name>
    <name type="common">Social amoeba</name>
    <dbReference type="NCBI Taxonomy" id="44689"/>
    <lineage>
        <taxon>Eukaryota</taxon>
        <taxon>Amoebozoa</taxon>
        <taxon>Evosea</taxon>
        <taxon>Eumycetozoa</taxon>
        <taxon>Dictyostelia</taxon>
        <taxon>Dictyosteliales</taxon>
        <taxon>Dictyosteliaceae</taxon>
        <taxon>Dictyostelium</taxon>
    </lineage>
</organism>
<evidence type="ECO:0000250" key="1"/>
<evidence type="ECO:0000255" key="2"/>
<evidence type="ECO:0000269" key="3">
    <source>
    </source>
</evidence>
<evidence type="ECO:0000269" key="4">
    <source>
    </source>
</evidence>
<evidence type="ECO:0000305" key="5"/>
<proteinExistence type="evidence at transcript level"/>
<accession>Q54B67</accession>
<protein>
    <recommendedName>
        <fullName>Mitochondrial substrate carrier family protein Z</fullName>
    </recommendedName>
</protein>
<feature type="chain" id="PRO_0000385532" description="Mitochondrial substrate carrier family protein Z">
    <location>
        <begin position="1"/>
        <end position="301"/>
    </location>
</feature>
<feature type="topological domain" description="Mitochondrial intermembrane" evidence="1">
    <location>
        <begin position="1"/>
        <end position="19"/>
    </location>
</feature>
<feature type="transmembrane region" description="Helical; Name=1" evidence="2">
    <location>
        <begin position="20"/>
        <end position="37"/>
    </location>
</feature>
<feature type="topological domain" description="Mitochondrial matrix" evidence="1">
    <location>
        <begin position="38"/>
        <end position="65"/>
    </location>
</feature>
<feature type="transmembrane region" description="Helical; Name=2" evidence="2">
    <location>
        <begin position="66"/>
        <end position="86"/>
    </location>
</feature>
<feature type="topological domain" description="Mitochondrial intermembrane" evidence="1">
    <location>
        <begin position="87"/>
        <end position="117"/>
    </location>
</feature>
<feature type="transmembrane region" description="Helical; Name=3" evidence="2">
    <location>
        <begin position="118"/>
        <end position="138"/>
    </location>
</feature>
<feature type="topological domain" description="Mitochondrial matrix" evidence="1">
    <location>
        <begin position="139"/>
        <end position="174"/>
    </location>
</feature>
<feature type="transmembrane region" description="Helical; Name=4" evidence="2">
    <location>
        <begin position="175"/>
        <end position="191"/>
    </location>
</feature>
<feature type="topological domain" description="Mitochondrial intermembrane" evidence="1">
    <location>
        <begin position="192"/>
        <end position="212"/>
    </location>
</feature>
<feature type="transmembrane region" description="Helical; Name=5" evidence="2">
    <location>
        <begin position="213"/>
        <end position="229"/>
    </location>
</feature>
<feature type="topological domain" description="Mitochondrial matrix" evidence="1">
    <location>
        <begin position="230"/>
        <end position="275"/>
    </location>
</feature>
<feature type="transmembrane region" description="Helical; Name=6" evidence="2">
    <location>
        <begin position="276"/>
        <end position="296"/>
    </location>
</feature>
<feature type="topological domain" description="Mitochondrial intermembrane" evidence="1">
    <location>
        <begin position="297"/>
        <end position="301"/>
    </location>
</feature>
<feature type="repeat" description="Solcar 1">
    <location>
        <begin position="14"/>
        <end position="101"/>
    </location>
</feature>
<feature type="repeat" description="Solcar 2">
    <location>
        <begin position="116"/>
        <end position="200"/>
    </location>
</feature>
<feature type="repeat" description="Solcar 3">
    <location>
        <begin position="210"/>
        <end position="293"/>
    </location>
</feature>
<sequence length="301" mass="33268">MTGKEENKQQQHVNFPWKRLVAGAVAGTADVWACHPLDRIKTQLQNNPGKSIVGTFGDIVSKGKGFTGGVNALYEGILPMTAEAIFKVGIRYFAFSWFTEQYKTTVYKGETLNKKQQFGANLLGGAFAGTIESFVVVIPCELLKVRHMTQEHNKSFGTVFRDVLREEGFQGLYKGGSATLLRQITNHMIRFPTFYAISDYLKGGDHSVHLPVWQNLSAGAIAGTASTLFNNPLDTIKTRMQKQGQNQTTMQVVRGIYQETGVKGYWAGVIPRILRVAPGQAITWAVVELVMGILEPSSKKH</sequence>
<reference key="1">
    <citation type="journal article" date="2005" name="Nature">
        <title>The genome of the social amoeba Dictyostelium discoideum.</title>
        <authorList>
            <person name="Eichinger L."/>
            <person name="Pachebat J.A."/>
            <person name="Gloeckner G."/>
            <person name="Rajandream M.A."/>
            <person name="Sucgang R."/>
            <person name="Berriman M."/>
            <person name="Song J."/>
            <person name="Olsen R."/>
            <person name="Szafranski K."/>
            <person name="Xu Q."/>
            <person name="Tunggal B."/>
            <person name="Kummerfeld S."/>
            <person name="Madera M."/>
            <person name="Konfortov B.A."/>
            <person name="Rivero F."/>
            <person name="Bankier A.T."/>
            <person name="Lehmann R."/>
            <person name="Hamlin N."/>
            <person name="Davies R."/>
            <person name="Gaudet P."/>
            <person name="Fey P."/>
            <person name="Pilcher K."/>
            <person name="Chen G."/>
            <person name="Saunders D."/>
            <person name="Sodergren E.J."/>
            <person name="Davis P."/>
            <person name="Kerhornou A."/>
            <person name="Nie X."/>
            <person name="Hall N."/>
            <person name="Anjard C."/>
            <person name="Hemphill L."/>
            <person name="Bason N."/>
            <person name="Farbrother P."/>
            <person name="Desany B."/>
            <person name="Just E."/>
            <person name="Morio T."/>
            <person name="Rost R."/>
            <person name="Churcher C.M."/>
            <person name="Cooper J."/>
            <person name="Haydock S."/>
            <person name="van Driessche N."/>
            <person name="Cronin A."/>
            <person name="Goodhead I."/>
            <person name="Muzny D.M."/>
            <person name="Mourier T."/>
            <person name="Pain A."/>
            <person name="Lu M."/>
            <person name="Harper D."/>
            <person name="Lindsay R."/>
            <person name="Hauser H."/>
            <person name="James K.D."/>
            <person name="Quiles M."/>
            <person name="Madan Babu M."/>
            <person name="Saito T."/>
            <person name="Buchrieser C."/>
            <person name="Wardroper A."/>
            <person name="Felder M."/>
            <person name="Thangavelu M."/>
            <person name="Johnson D."/>
            <person name="Knights A."/>
            <person name="Loulseged H."/>
            <person name="Mungall K.L."/>
            <person name="Oliver K."/>
            <person name="Price C."/>
            <person name="Quail M.A."/>
            <person name="Urushihara H."/>
            <person name="Hernandez J."/>
            <person name="Rabbinowitsch E."/>
            <person name="Steffen D."/>
            <person name="Sanders M."/>
            <person name="Ma J."/>
            <person name="Kohara Y."/>
            <person name="Sharp S."/>
            <person name="Simmonds M.N."/>
            <person name="Spiegler S."/>
            <person name="Tivey A."/>
            <person name="Sugano S."/>
            <person name="White B."/>
            <person name="Walker D."/>
            <person name="Woodward J.R."/>
            <person name="Winckler T."/>
            <person name="Tanaka Y."/>
            <person name="Shaulsky G."/>
            <person name="Schleicher M."/>
            <person name="Weinstock G.M."/>
            <person name="Rosenthal A."/>
            <person name="Cox E.C."/>
            <person name="Chisholm R.L."/>
            <person name="Gibbs R.A."/>
            <person name="Loomis W.F."/>
            <person name="Platzer M."/>
            <person name="Kay R.R."/>
            <person name="Williams J.G."/>
            <person name="Dear P.H."/>
            <person name="Noegel A.A."/>
            <person name="Barrell B.G."/>
            <person name="Kuspa A."/>
        </authorList>
    </citation>
    <scope>NUCLEOTIDE SEQUENCE [LARGE SCALE GENOMIC DNA]</scope>
    <source>
        <strain>AX4</strain>
    </source>
</reference>
<reference key="2">
    <citation type="journal article" date="2001" name="Mol. Biol. Cell">
        <title>Expression patterns of cell-type-specific genes in Dictyostelium.</title>
        <authorList>
            <person name="Iranfar N."/>
            <person name="Fuller D."/>
            <person name="Sasik R."/>
            <person name="Hwa T."/>
            <person name="Laub M."/>
            <person name="Loomis W.F."/>
        </authorList>
    </citation>
    <scope>DEVELOPMENTAL STAGE</scope>
</reference>
<reference key="3">
    <citation type="journal article" date="2003" name="Eukaryot. Cell">
        <title>Changing patterns of gene expression in Dictyostelium prestalk cell subtypes recognized by in situ hybridization with genes from microarray analyses.</title>
        <authorList>
            <person name="Maeda M."/>
            <person name="Sakamoto H."/>
            <person name="Iranfar N."/>
            <person name="Fuller D."/>
            <person name="Maruo T."/>
            <person name="Ogihara S."/>
            <person name="Morio T."/>
            <person name="Urushihara H."/>
            <person name="Tanaka Y."/>
            <person name="Loomis W.F."/>
        </authorList>
    </citation>
    <scope>DEVELOPMENTAL STAGE</scope>
</reference>
<reference key="4">
    <citation type="journal article" date="2007" name="Biochimie">
        <title>Mitochondrial carrier family: repertoire and peculiarities of the cellular slime mould Dictyostelium discoideum.</title>
        <authorList>
            <person name="Satre M."/>
            <person name="Mattei S."/>
            <person name="Aubry L."/>
            <person name="Gaudet P."/>
            <person name="Pelosi L."/>
            <person name="Brandolin G."/>
            <person name="Klein G."/>
        </authorList>
    </citation>
    <scope>REVIEW</scope>
</reference>
<comment type="function">
    <text evidence="1">Mitochondrial solute carriers shuttle metabolites, nucleotides, and cofactors through the mitochondrial inner membrane.</text>
</comment>
<comment type="subcellular location">
    <subcellularLocation>
        <location evidence="1">Mitochondrion inner membrane</location>
        <topology evidence="1">Multi-pass membrane protein</topology>
    </subcellularLocation>
</comment>
<comment type="developmental stage">
    <text evidence="3 4">Present in vegetative cells but expression decreases rapidly after the initiation of development. Also accumulates in prestalk cells.</text>
</comment>
<comment type="similarity">
    <text evidence="5">Belongs to the mitochondrial carrier (TC 2.A.29) family.</text>
</comment>
<dbReference type="EMBL" id="AAFI02000223">
    <property type="protein sequence ID" value="EAL60508.1"/>
    <property type="molecule type" value="Genomic_DNA"/>
</dbReference>
<dbReference type="RefSeq" id="XP_628921.1">
    <property type="nucleotide sequence ID" value="XM_628919.1"/>
</dbReference>
<dbReference type="SMR" id="Q54B67"/>
<dbReference type="STRING" id="44689.Q54B67"/>
<dbReference type="PaxDb" id="44689-DDB0229992"/>
<dbReference type="EnsemblProtists" id="EAL60508">
    <property type="protein sequence ID" value="EAL60508"/>
    <property type="gene ID" value="DDB_G0293874"/>
</dbReference>
<dbReference type="GeneID" id="8629463"/>
<dbReference type="KEGG" id="ddi:DDB_G0293874"/>
<dbReference type="dictyBase" id="DDB_G0293874">
    <property type="gene designation" value="mcfZ"/>
</dbReference>
<dbReference type="VEuPathDB" id="AmoebaDB:DDB_G0293874"/>
<dbReference type="eggNOG" id="KOG0756">
    <property type="taxonomic scope" value="Eukaryota"/>
</dbReference>
<dbReference type="HOGENOM" id="CLU_015166_5_0_1"/>
<dbReference type="InParanoid" id="Q54B67"/>
<dbReference type="OMA" id="VRFLFFD"/>
<dbReference type="PhylomeDB" id="Q54B67"/>
<dbReference type="PRO" id="PR:Q54B67"/>
<dbReference type="Proteomes" id="UP000002195">
    <property type="component" value="Chromosome 6"/>
</dbReference>
<dbReference type="GO" id="GO:0005743">
    <property type="term" value="C:mitochondrial inner membrane"/>
    <property type="evidence" value="ECO:0007669"/>
    <property type="project" value="UniProtKB-SubCell"/>
</dbReference>
<dbReference type="GO" id="GO:0005739">
    <property type="term" value="C:mitochondrion"/>
    <property type="evidence" value="ECO:0000318"/>
    <property type="project" value="GO_Central"/>
</dbReference>
<dbReference type="GO" id="GO:0005469">
    <property type="term" value="F:succinate:fumarate antiporter activity"/>
    <property type="evidence" value="ECO:0000250"/>
    <property type="project" value="dictyBase"/>
</dbReference>
<dbReference type="GO" id="GO:0015741">
    <property type="term" value="P:fumarate transport"/>
    <property type="evidence" value="ECO:0000250"/>
    <property type="project" value="dictyBase"/>
</dbReference>
<dbReference type="GO" id="GO:0015744">
    <property type="term" value="P:succinate transport"/>
    <property type="evidence" value="ECO:0000250"/>
    <property type="project" value="dictyBase"/>
</dbReference>
<dbReference type="FunFam" id="1.50.40.10:FF:000311">
    <property type="entry name" value="Mitochondrial substrate carrier family protein Z"/>
    <property type="match status" value="1"/>
</dbReference>
<dbReference type="Gene3D" id="1.50.40.10">
    <property type="entry name" value="Mitochondrial carrier domain"/>
    <property type="match status" value="1"/>
</dbReference>
<dbReference type="InterPro" id="IPR018108">
    <property type="entry name" value="Mitochondrial_sb/sol_carrier"/>
</dbReference>
<dbReference type="InterPro" id="IPR023395">
    <property type="entry name" value="Mt_carrier_dom_sf"/>
</dbReference>
<dbReference type="InterPro" id="IPR049563">
    <property type="entry name" value="TXTP-like"/>
</dbReference>
<dbReference type="PANTHER" id="PTHR45788">
    <property type="entry name" value="SUCCINATE/FUMARATE MITOCHONDRIAL TRANSPORTER-RELATED"/>
    <property type="match status" value="1"/>
</dbReference>
<dbReference type="PANTHER" id="PTHR45788:SF2">
    <property type="entry name" value="SUCCINATE_FUMARATE MITOCHONDRIAL TRANSPORTER"/>
    <property type="match status" value="1"/>
</dbReference>
<dbReference type="Pfam" id="PF00153">
    <property type="entry name" value="Mito_carr"/>
    <property type="match status" value="3"/>
</dbReference>
<dbReference type="SUPFAM" id="SSF103506">
    <property type="entry name" value="Mitochondrial carrier"/>
    <property type="match status" value="1"/>
</dbReference>
<dbReference type="PROSITE" id="PS50920">
    <property type="entry name" value="SOLCAR"/>
    <property type="match status" value="3"/>
</dbReference>
<gene>
    <name type="primary">mcfZ</name>
    <name type="synonym">mitA</name>
    <name type="ORF">DDB_G0293874</name>
</gene>
<name>MCFZ_DICDI</name>